<feature type="chain" id="PRO_0000073648" description="Actin cytoskeleton-regulatory complex protein END3">
    <location>
        <begin position="1"/>
        <end position="349"/>
    </location>
</feature>
<feature type="domain" description="EH 1" evidence="2">
    <location>
        <begin position="8"/>
        <end position="98"/>
    </location>
</feature>
<feature type="domain" description="EF-hand 1" evidence="3">
    <location>
        <begin position="40"/>
        <end position="75"/>
    </location>
</feature>
<feature type="domain" description="EH 2" evidence="2">
    <location>
        <begin position="130"/>
        <end position="222"/>
    </location>
</feature>
<feature type="domain" description="EF-hand 2" evidence="3">
    <location>
        <begin position="146"/>
        <end position="164"/>
    </location>
</feature>
<feature type="repeat" description="1">
    <location>
        <begin position="276"/>
        <end position="295"/>
    </location>
</feature>
<feature type="repeat" description="2">
    <location>
        <begin position="315"/>
        <end position="334"/>
    </location>
</feature>
<feature type="region of interest" description="Polyphosphoinositide (PIP2)-binding" evidence="1">
    <location>
        <begin position="96"/>
        <end position="105"/>
    </location>
</feature>
<feature type="region of interest" description="Disordered" evidence="4">
    <location>
        <begin position="226"/>
        <end position="265"/>
    </location>
</feature>
<feature type="region of interest" description="2 X 20 AA approximate repeats">
    <location>
        <begin position="276"/>
        <end position="334"/>
    </location>
</feature>
<feature type="coiled-coil region" evidence="1">
    <location>
        <begin position="307"/>
        <end position="349"/>
    </location>
</feature>
<feature type="compositionally biased region" description="Basic and acidic residues" evidence="4">
    <location>
        <begin position="236"/>
        <end position="248"/>
    </location>
</feature>
<feature type="compositionally biased region" description="Low complexity" evidence="4">
    <location>
        <begin position="249"/>
        <end position="265"/>
    </location>
</feature>
<feature type="binding site" evidence="3">
    <location>
        <position position="53"/>
    </location>
    <ligand>
        <name>Ca(2+)</name>
        <dbReference type="ChEBI" id="CHEBI:29108"/>
    </ligand>
</feature>
<feature type="binding site" evidence="3">
    <location>
        <position position="55"/>
    </location>
    <ligand>
        <name>Ca(2+)</name>
        <dbReference type="ChEBI" id="CHEBI:29108"/>
    </ligand>
</feature>
<feature type="binding site" evidence="3">
    <location>
        <position position="57"/>
    </location>
    <ligand>
        <name>Ca(2+)</name>
        <dbReference type="ChEBI" id="CHEBI:29108"/>
    </ligand>
</feature>
<feature type="binding site" evidence="3">
    <location>
        <position position="59"/>
    </location>
    <ligand>
        <name>Ca(2+)</name>
        <dbReference type="ChEBI" id="CHEBI:29108"/>
    </ligand>
</feature>
<feature type="binding site" evidence="3">
    <location>
        <position position="64"/>
    </location>
    <ligand>
        <name>Ca(2+)</name>
        <dbReference type="ChEBI" id="CHEBI:29108"/>
    </ligand>
</feature>
<feature type="modified residue" description="Phosphoserine" evidence="31">
    <location>
        <position position="276"/>
    </location>
</feature>
<feature type="sequence variant" description="In strain: YJM 421." evidence="9">
    <original>D</original>
    <variation>E</variation>
    <location>
        <position position="245"/>
    </location>
</feature>
<feature type="sequence variant" description="In strain: YJM 280, YJM 320, YJM 326, YJM 627, YJM 789 and YJM 1129." evidence="9">
    <original>S</original>
    <variation>N</variation>
    <location>
        <position position="258"/>
    </location>
</feature>
<feature type="sequence variant" description="In strain: SK1, YJM 269, YJM 270, YJM 280, YJM 320, YJM 326, YJM 339, YJM 421, YJM 627, YJM 789 and YJM 1129." evidence="9 14">
    <original>D</original>
    <variation>N</variation>
    <location>
        <position position="268"/>
    </location>
</feature>
<protein>
    <recommendedName>
        <fullName>Actin cytoskeleton-regulatory complex protein END3</fullName>
    </recommendedName>
    <alternativeName>
        <fullName>Endocytosis protein 3</fullName>
    </alternativeName>
</protein>
<gene>
    <name type="primary">END3</name>
    <name type="ordered locus">YNL084C</name>
    <name type="ORF">N2307</name>
</gene>
<reference key="1">
    <citation type="journal article" date="1994" name="Mol. Biol. Cell">
        <title>The END3 gene encodes a protein that is required for the internalization step of endocytosis and for actin cytoskeleton organization in yeast.</title>
        <authorList>
            <person name="Benedetti H."/>
            <person name="Raths S."/>
            <person name="Crausaz F."/>
            <person name="Riezman H."/>
        </authorList>
    </citation>
    <scope>NUCLEOTIDE SEQUENCE [GENOMIC DNA]</scope>
    <scope>FUNCTION</scope>
    <scope>SUBCELLULAR LOCATION</scope>
</reference>
<reference key="2">
    <citation type="journal article" date="2002" name="Nature">
        <title>Dissecting the architecture of a quantitative trait locus in yeast.</title>
        <authorList>
            <person name="Steinmetz L.M."/>
            <person name="Sinha H."/>
            <person name="Richards D.R."/>
            <person name="Spiegelman J.I."/>
            <person name="Oefner P.J."/>
            <person name="McCusker J.H."/>
            <person name="Davis R.W."/>
        </authorList>
    </citation>
    <scope>NUCLEOTIDE SEQUENCE [GENOMIC DNA]</scope>
    <scope>VARIANTS GLU-245; ASN-258 AND ASN-268</scope>
    <source>
        <strain>ATCC 200060 / W303</strain>
        <strain>S96</strain>
        <strain>SK1</strain>
        <strain>YJM 1129</strain>
        <strain>YJM 269</strain>
        <strain>YJM 270</strain>
        <strain>YJM 280</strain>
        <strain>YJM 320</strain>
        <strain>YJM 326</strain>
        <strain>YJM 339</strain>
        <strain>YJM 421</strain>
        <strain>YJM 627</strain>
        <strain>YJM 789</strain>
    </source>
</reference>
<reference key="3">
    <citation type="journal article" date="2005" name="Nat. Genet.">
        <title>Quantitative trait loci mapped to single-nucleotide resolution in yeast.</title>
        <authorList>
            <person name="Deutschbauer A.M."/>
            <person name="Davis R.W."/>
        </authorList>
    </citation>
    <scope>NUCLEOTIDE SEQUENCE [GENOMIC DNA]</scope>
    <scope>VARIANT ASN-268</scope>
    <source>
        <strain>SK1</strain>
    </source>
</reference>
<reference key="4">
    <citation type="journal article" date="1996" name="Yeast">
        <title>The sequence of a 17,933 bp segment of Saccharomyces cerevisiae chromosome XIV contains the RHO2, TOP2, MKT1 and END3 genes and five new open reading frames.</title>
        <authorList>
            <person name="Soler-Mira A."/>
            <person name="Saiz J.E."/>
            <person name="Ballesta J.P.G."/>
            <person name="Remacha M.A."/>
        </authorList>
    </citation>
    <scope>NUCLEOTIDE SEQUENCE [GENOMIC DNA]</scope>
    <source>
        <strain>ATCC 96604 / S288c / FY1679</strain>
    </source>
</reference>
<reference key="5">
    <citation type="journal article" date="1997" name="Nature">
        <title>The nucleotide sequence of Saccharomyces cerevisiae chromosome XIV and its evolutionary implications.</title>
        <authorList>
            <person name="Philippsen P."/>
            <person name="Kleine K."/>
            <person name="Poehlmann R."/>
            <person name="Duesterhoeft A."/>
            <person name="Hamberg K."/>
            <person name="Hegemann J.H."/>
            <person name="Obermaier B."/>
            <person name="Urrestarazu L.A."/>
            <person name="Aert R."/>
            <person name="Albermann K."/>
            <person name="Altmann R."/>
            <person name="Andre B."/>
            <person name="Baladron V."/>
            <person name="Ballesta J.P.G."/>
            <person name="Becam A.-M."/>
            <person name="Beinhauer J.D."/>
            <person name="Boskovic J."/>
            <person name="Buitrago M.J."/>
            <person name="Bussereau F."/>
            <person name="Coster F."/>
            <person name="Crouzet M."/>
            <person name="D'Angelo M."/>
            <person name="Dal Pero F."/>
            <person name="De Antoni A."/>
            <person name="del Rey F."/>
            <person name="Doignon F."/>
            <person name="Domdey H."/>
            <person name="Dubois E."/>
            <person name="Fiedler T.A."/>
            <person name="Fleig U."/>
            <person name="Floeth M."/>
            <person name="Fritz C."/>
            <person name="Gaillardin C."/>
            <person name="Garcia-Cantalejo J.M."/>
            <person name="Glansdorff N."/>
            <person name="Goffeau A."/>
            <person name="Gueldener U."/>
            <person name="Herbert C.J."/>
            <person name="Heumann K."/>
            <person name="Heuss-Neitzel D."/>
            <person name="Hilbert H."/>
            <person name="Hinni K."/>
            <person name="Iraqui Houssaini I."/>
            <person name="Jacquet M."/>
            <person name="Jimenez A."/>
            <person name="Jonniaux J.-L."/>
            <person name="Karpfinger-Hartl L."/>
            <person name="Lanfranchi G."/>
            <person name="Lepingle A."/>
            <person name="Levesque H."/>
            <person name="Lyck R."/>
            <person name="Maftahi M."/>
            <person name="Mallet L."/>
            <person name="Maurer C.T.C."/>
            <person name="Messenguy F."/>
            <person name="Mewes H.-W."/>
            <person name="Moestl D."/>
            <person name="Nasr F."/>
            <person name="Nicaud J.-M."/>
            <person name="Niedenthal R.K."/>
            <person name="Pandolfo D."/>
            <person name="Pierard A."/>
            <person name="Piravandi E."/>
            <person name="Planta R.J."/>
            <person name="Pohl T.M."/>
            <person name="Purnelle B."/>
            <person name="Rebischung C."/>
            <person name="Remacha M.A."/>
            <person name="Revuelta J.L."/>
            <person name="Rinke M."/>
            <person name="Saiz J.E."/>
            <person name="Sartorello F."/>
            <person name="Scherens B."/>
            <person name="Sen-Gupta M."/>
            <person name="Soler-Mira A."/>
            <person name="Urbanus J.H.M."/>
            <person name="Valle G."/>
            <person name="Van Dyck L."/>
            <person name="Verhasselt P."/>
            <person name="Vierendeels F."/>
            <person name="Vissers S."/>
            <person name="Voet M."/>
            <person name="Volckaert G."/>
            <person name="Wach A."/>
            <person name="Wambutt R."/>
            <person name="Wedler H."/>
            <person name="Zollner A."/>
            <person name="Hani J."/>
        </authorList>
    </citation>
    <scope>NUCLEOTIDE SEQUENCE [LARGE SCALE GENOMIC DNA]</scope>
    <source>
        <strain>ATCC 204508 / S288c</strain>
    </source>
</reference>
<reference key="6">
    <citation type="journal article" date="2014" name="G3 (Bethesda)">
        <title>The reference genome sequence of Saccharomyces cerevisiae: Then and now.</title>
        <authorList>
            <person name="Engel S.R."/>
            <person name="Dietrich F.S."/>
            <person name="Fisk D.G."/>
            <person name="Binkley G."/>
            <person name="Balakrishnan R."/>
            <person name="Costanzo M.C."/>
            <person name="Dwight S.S."/>
            <person name="Hitz B.C."/>
            <person name="Karra K."/>
            <person name="Nash R.S."/>
            <person name="Weng S."/>
            <person name="Wong E.D."/>
            <person name="Lloyd P."/>
            <person name="Skrzypek M.S."/>
            <person name="Miyasato S.R."/>
            <person name="Simison M."/>
            <person name="Cherry J.M."/>
        </authorList>
    </citation>
    <scope>GENOME REANNOTATION</scope>
    <source>
        <strain>ATCC 204508 / S288c</strain>
    </source>
</reference>
<reference key="7">
    <citation type="journal article" date="1993" name="J. Cell Biol.">
        <title>END3 and END4: two mutants defective in receptor-mediated and fluid-phase endocytosis in Saccharomyces cerevisiae.</title>
        <authorList>
            <person name="Raths S."/>
            <person name="Rohrer J."/>
            <person name="Crausaz F."/>
            <person name="Riezman H."/>
        </authorList>
    </citation>
    <scope>FUNCTION</scope>
</reference>
<reference key="8">
    <citation type="journal article" date="1994" name="J. Biol. Chem.">
        <title>Endocytosis and degradation of the yeast uracil permease under adverse conditions.</title>
        <authorList>
            <person name="Volland C."/>
            <person name="Urban-Grimal D."/>
            <person name="Geraud G."/>
            <person name="Haguenauer-Tsapis R."/>
        </authorList>
    </citation>
    <scope>FUNCTION</scope>
</reference>
<reference key="9">
    <citation type="journal article" date="1994" name="Mol. Biol. Cell">
        <title>Metabolic instability and constitutive endocytosis of STE6, the a-factor transporter of Saccharomyces cerevisiae.</title>
        <authorList>
            <person name="Berkower C."/>
            <person name="Loayza D."/>
            <person name="Michaelis S."/>
        </authorList>
    </citation>
    <scope>FUNCTION</scope>
</reference>
<reference key="10">
    <citation type="journal article" date="1995" name="J. Biol. Chem.">
        <title>Regulation of inositol transport in Saccharomyces cerevisiae involves inositol-induced changes in permease stability and endocytic degradation in the vacuole.</title>
        <authorList>
            <person name="Lai K."/>
            <person name="Bolognese C.P."/>
            <person name="Swift S."/>
            <person name="McGraw P."/>
        </authorList>
    </citation>
    <scope>FUNCTION</scope>
</reference>
<reference key="11">
    <citation type="journal article" date="1996" name="J. Cell Biol.">
        <title>The sequence NPFXD defines a new class of endocytosis signal in Saccharomyces cerevisiae.</title>
        <authorList>
            <person name="Tan P.K."/>
            <person name="Howard J.P."/>
            <person name="Payne G.S."/>
        </authorList>
    </citation>
    <scope>FUNCTION</scope>
</reference>
<reference key="12">
    <citation type="journal article" date="1996" name="Mol. Biol. Cell">
        <title>Inositol transport in Saccharomyces cerevisiae is regulated by transcriptional and degradative endocytic mechanisms during the growth cycle that are distinct from inositol-induced regulation.</title>
        <authorList>
            <person name="Robinson K.S."/>
            <person name="Lai K."/>
            <person name="Cannon T.A."/>
            <person name="McGraw P."/>
        </authorList>
    </citation>
    <scope>FUNCTION</scope>
</reference>
<reference key="13">
    <citation type="journal article" date="1997" name="J. Cell Biol.">
        <title>High rates of actin filament turnover in budding yeast and roles for actin in establishment and maintenance of cell polarity revealed using the actin inhibitor latrunculin-A.</title>
        <authorList>
            <person name="Ayscough K.R."/>
            <person name="Stryker J."/>
            <person name="Pokala N."/>
            <person name="Sanders M."/>
            <person name="Crews P."/>
            <person name="Drubin D.G."/>
        </authorList>
    </citation>
    <scope>FUNCTION</scope>
</reference>
<reference key="14">
    <citation type="journal article" date="1997" name="Mol. Biol. Cell">
        <title>The yeast actin-related protein Arp2p is required for the internalization step of endocytosis.</title>
        <authorList>
            <person name="Moreau V."/>
            <person name="Galan J.-M."/>
            <person name="Devilliers G."/>
            <person name="Haguenauer-Tsapis R."/>
            <person name="Winsor B."/>
        </authorList>
    </citation>
    <scope>FUNCTION</scope>
</reference>
<reference key="15">
    <citation type="journal article" date="1997" name="Mol. Cell. Biol.">
        <title>EH domain proteins Pan1p and End3p are components of a complex that plays a dual role in organization of the cortical actin cytoskeleton and endocytosis in Saccharomyces cerevisiae.</title>
        <authorList>
            <person name="Tang H.-Y."/>
            <person name="Munn A."/>
            <person name="Cai M."/>
        </authorList>
    </citation>
    <scope>FUNCTION</scope>
    <scope>IDENTIFICATION IN THE PAN1 COMPLEX</scope>
</reference>
<reference key="16">
    <citation type="journal article" date="1998" name="EMBO J.">
        <title>Recognition specificity of individual EH domains of mammals and yeast.</title>
        <authorList>
            <person name="Paoluzi S."/>
            <person name="Castagnoli L."/>
            <person name="Lauro I."/>
            <person name="Salcini A.E."/>
            <person name="Coda L."/>
            <person name="Fre' S."/>
            <person name="Confalonieri S."/>
            <person name="Pelicci P.G."/>
            <person name="Di Fiore P.P."/>
            <person name="Cesareni G."/>
        </authorList>
    </citation>
    <scope>DOMAINS</scope>
</reference>
<reference key="17">
    <citation type="journal article" date="1998" name="Mol. Biol. Cell">
        <title>Morphology of the yeast endocytic pathway.</title>
        <authorList>
            <person name="Prescianotto-Baschong C."/>
            <person name="Riezman H."/>
        </authorList>
    </citation>
    <scope>FUNCTION</scope>
</reference>
<reference key="18">
    <citation type="journal article" date="1999" name="J. Cell Biol.">
        <title>Regulation of the actin cytoskeleton organization in yeast by a novel serine/threonine kinase Prk1p.</title>
        <authorList>
            <person name="Zeng G."/>
            <person name="Cai M."/>
        </authorList>
    </citation>
    <scope>FUNCTION</scope>
</reference>
<reference key="19">
    <citation type="journal article" date="2000" name="J. Cell Sci.">
        <title>A novel EH domain protein of Saccharomyces cerevisiae, Ede1p, involved in endocytosis.</title>
        <authorList>
            <person name="Gagny B."/>
            <person name="Wiederkehr A."/>
            <person name="Dumoulin P."/>
            <person name="Winsor B."/>
            <person name="Riezman H."/>
            <person name="Haguenauer-Tsapis R."/>
        </authorList>
    </citation>
    <scope>FUNCTION</scope>
</reference>
<reference key="20">
    <citation type="journal article" date="2000" name="Mol. Cell. Biol.">
        <title>Pan1p, End3p, and Sla1p, three yeast proteins required for normal cortical actin cytoskeleton organization, associate with each other and play essential roles in cell wall morphogenesis.</title>
        <authorList>
            <person name="Tang H.-Y."/>
            <person name="Xu J."/>
            <person name="Cai M."/>
        </authorList>
    </citation>
    <scope>FUNCTION</scope>
    <scope>IDENTIFICATION IN THE PAN1 COMPLEX</scope>
</reference>
<reference key="21">
    <citation type="journal article" date="2000" name="Mol. Microbiol.">
        <title>Endocytotic uptake and retrograde transport of a virally encoded killer toxin in yeast.</title>
        <authorList>
            <person name="Eisfeld K."/>
            <person name="Riffer F."/>
            <person name="Mentges J."/>
            <person name="Schmitt M.J."/>
        </authorList>
    </citation>
    <scope>FUNCTION</scope>
</reference>
<reference key="22">
    <citation type="journal article" date="2001" name="Mol. Biol. Cell">
        <title>Regulation of yeast actin cytoskeleton-regulatory complex Pan1p/Sla1p/End3p by serine/threonine kinase Prk1p.</title>
        <authorList>
            <person name="Zeng G."/>
            <person name="Yu X."/>
            <person name="Cai M."/>
        </authorList>
    </citation>
    <scope>INTERACTION WITH PAN1</scope>
    <scope>IDENTIFICATION IN THE PAN1 COMPLEX</scope>
</reference>
<reference key="23">
    <citation type="journal article" date="2002" name="J. Cell Biol.">
        <title>Sla1p serves as the targeting signal recognition factor for NPFX(1,2)D-mediated endocytosis.</title>
        <authorList>
            <person name="Howard J.P."/>
            <person name="Hutton J.L."/>
            <person name="Olson J.M."/>
            <person name="Payne G.S."/>
        </authorList>
    </citation>
    <scope>INTERACTION WITH YAP1802</scope>
</reference>
<reference key="24">
    <citation type="journal article" date="2003" name="Nature">
        <title>Global analysis of protein localization in budding yeast.</title>
        <authorList>
            <person name="Huh W.-K."/>
            <person name="Falvo J.V."/>
            <person name="Gerke L.C."/>
            <person name="Carroll A.S."/>
            <person name="Howson R.W."/>
            <person name="Weissman J.S."/>
            <person name="O'Shea E.K."/>
        </authorList>
    </citation>
    <scope>SUBCELLULAR LOCATION [LARGE SCALE ANALYSIS]</scope>
</reference>
<reference key="25">
    <citation type="journal article" date="2003" name="Nature">
        <title>Global analysis of protein expression in yeast.</title>
        <authorList>
            <person name="Ghaemmaghami S."/>
            <person name="Huh W.-K."/>
            <person name="Bower K."/>
            <person name="Howson R.W."/>
            <person name="Belle A."/>
            <person name="Dephoure N."/>
            <person name="O'Shea E.K."/>
            <person name="Weissman J.S."/>
        </authorList>
    </citation>
    <scope>LEVEL OF PROTEIN EXPRESSION [LARGE SCALE ANALYSIS]</scope>
</reference>
<reference key="26">
    <citation type="journal article" date="2004" name="Biochem. J.">
        <title>Characterization of a transport and detoxification pathway for the antitumour drug bleomycin in Saccharomyces cerevisiae.</title>
        <authorList>
            <person name="Aouida M."/>
            <person name="Leduc A."/>
            <person name="Wang H."/>
            <person name="Ramotar D."/>
        </authorList>
    </citation>
    <scope>FUNCTION</scope>
</reference>
<reference key="27">
    <citation type="journal article" date="2005" name="Genetics">
        <title>End3p-mediated endocytosis is required for spore wall formation in Saccharomyces cerevisiae.</title>
        <authorList>
            <person name="Morishita M."/>
            <person name="Engebrecht J."/>
        </authorList>
    </citation>
    <scope>FUNCTION</scope>
</reference>
<reference key="28">
    <citation type="journal article" date="2006" name="Mol. Cell. Biol.">
        <title>Actin-induced hyperactivation of the Ras signaling pathway leads to apoptosis in Saccharomyces cerevisiae.</title>
        <authorList>
            <person name="Gourlay C.W."/>
            <person name="Ayscough K.R."/>
        </authorList>
    </citation>
    <scope>FUNCTION</scope>
</reference>
<reference key="29">
    <citation type="journal article" date="2007" name="J. Proteome Res.">
        <title>Large-scale phosphorylation analysis of alpha-factor-arrested Saccharomyces cerevisiae.</title>
        <authorList>
            <person name="Li X."/>
            <person name="Gerber S.A."/>
            <person name="Rudner A.D."/>
            <person name="Beausoleil S.A."/>
            <person name="Haas W."/>
            <person name="Villen J."/>
            <person name="Elias J.E."/>
            <person name="Gygi S.P."/>
        </authorList>
    </citation>
    <scope>IDENTIFICATION BY MASS SPECTROMETRY [LARGE SCALE ANALYSIS]</scope>
    <source>
        <strain>ADR376</strain>
    </source>
</reference>
<reference key="30">
    <citation type="journal article" date="2007" name="Mol. Biol. Cell">
        <title>Negative regulation of yeast Eps15-like Arp2/3 complex activator, Pan1p, by the Hip1R-related protein, Sla2p, during endocytosis.</title>
        <authorList>
            <person name="Toshima J."/>
            <person name="Toshima J.Y."/>
            <person name="Duncan M.C."/>
            <person name="Cope M.J.T.V."/>
            <person name="Sun Y."/>
            <person name="Martin A.C."/>
            <person name="Anderson S."/>
            <person name="Yates J.R. III"/>
            <person name="Mizuno K."/>
            <person name="Drubin D.G."/>
        </authorList>
    </citation>
    <scope>INTERACTION WITH SLA2</scope>
</reference>
<reference key="31">
    <citation type="journal article" date="2007" name="Mol. Biol. Cell">
        <title>Scd5p mediates phosphoregulation of actin and endocytosis by the type 1 phosphatase Glc7p in yeast.</title>
        <authorList>
            <person name="Zeng G."/>
            <person name="Huang B."/>
            <person name="Neo S.P."/>
            <person name="Wang J."/>
            <person name="Cai M."/>
        </authorList>
    </citation>
    <scope>INTERACTION WITH SCD5</scope>
</reference>
<reference key="32">
    <citation type="journal article" date="2008" name="Mol. Cell. Proteomics">
        <title>A multidimensional chromatography technology for in-depth phosphoproteome analysis.</title>
        <authorList>
            <person name="Albuquerque C.P."/>
            <person name="Smolka M.B."/>
            <person name="Payne S.H."/>
            <person name="Bafna V."/>
            <person name="Eng J."/>
            <person name="Zhou H."/>
        </authorList>
    </citation>
    <scope>PHOSPHORYLATION [LARGE SCALE ANALYSIS] AT SER-276</scope>
    <scope>IDENTIFICATION BY MASS SPECTROMETRY [LARGE SCALE ANALYSIS]</scope>
</reference>
<reference key="33">
    <citation type="journal article" date="2008" name="Traffic">
        <title>Multiple pathways regulate endocytic coat disassembly in Saccharomyces cerevisiae for optimal downstream trafficking.</title>
        <authorList>
            <person name="Toret C.P."/>
            <person name="Lee L."/>
            <person name="Sekiya-Kawasaki M."/>
            <person name="Drubin D.G."/>
        </authorList>
    </citation>
    <scope>SUBCELLULAR LOCATION</scope>
</reference>
<reference key="34">
    <citation type="journal article" date="2009" name="Science">
        <title>Global analysis of Cdk1 substrate phosphorylation sites provides insights into evolution.</title>
        <authorList>
            <person name="Holt L.J."/>
            <person name="Tuch B.B."/>
            <person name="Villen J."/>
            <person name="Johnson A.D."/>
            <person name="Gygi S.P."/>
            <person name="Morgan D.O."/>
        </authorList>
    </citation>
    <scope>IDENTIFICATION BY MASS SPECTROMETRY [LARGE SCALE ANALYSIS]</scope>
</reference>
<keyword id="KW-0009">Actin-binding</keyword>
<keyword id="KW-0106">Calcium</keyword>
<keyword id="KW-1003">Cell membrane</keyword>
<keyword id="KW-0175">Coiled coil</keyword>
<keyword id="KW-0963">Cytoplasm</keyword>
<keyword id="KW-0206">Cytoskeleton</keyword>
<keyword id="KW-0254">Endocytosis</keyword>
<keyword id="KW-0967">Endosome</keyword>
<keyword id="KW-0472">Membrane</keyword>
<keyword id="KW-0479">Metal-binding</keyword>
<keyword id="KW-0597">Phosphoprotein</keyword>
<keyword id="KW-1185">Reference proteome</keyword>
<keyword id="KW-0677">Repeat</keyword>
<proteinExistence type="evidence at protein level"/>
<organism>
    <name type="scientific">Saccharomyces cerevisiae (strain ATCC 204508 / S288c)</name>
    <name type="common">Baker's yeast</name>
    <dbReference type="NCBI Taxonomy" id="559292"/>
    <lineage>
        <taxon>Eukaryota</taxon>
        <taxon>Fungi</taxon>
        <taxon>Dikarya</taxon>
        <taxon>Ascomycota</taxon>
        <taxon>Saccharomycotina</taxon>
        <taxon>Saccharomycetes</taxon>
        <taxon>Saccharomycetales</taxon>
        <taxon>Saccharomycetaceae</taxon>
        <taxon>Saccharomyces</taxon>
    </lineage>
</organism>
<comment type="function">
    <text evidence="5 6 7 12 13 15 18 19 20 21 22 23 24 25 26 27 28 29">Component of the PAN1 actin cytoskeleton-regulatory complex required for the internalization of endosomes during actin-coupled endocytosis. The complex links the site of endocytosis to the cell membrane-associated actin cytoskeleton. Mediates uptake of external molecules and vacuolar degradation of plasma membrane proteins. Plays a role in the proper organization of the cell membrane-associated actin cytoskeleton and promotes its destabilization. END3 regulates PAN1 function by preventing phosphorylation of PAN1 by PKR1 and is also involved in the correct localization of SLA1 to the cell cortex, in the bipolar budding of diploid cells and the correct distribution of chitin at the cell surface.</text>
</comment>
<comment type="subunit">
    <text evidence="5 8 10 16 17 26">Component of the PAN1 actin cytoskeleton-regulatory complex composed of at least END3, PAN1, and SLA1. Interacts with SCD5, SLA2 and YAP1802. Interacts directly with PAN1; the interaction with PAN1 is prevented by PAN1 phosphorylation by PKR1.</text>
</comment>
<comment type="interaction">
    <interactant intactId="EBI-6460">
        <id>P39013</id>
    </interactant>
    <interactant intactId="EBI-10022">
        <id>Q12446</id>
        <label>LAS17</label>
    </interactant>
    <organismsDiffer>false</organismsDiffer>
    <experiments>3</experiments>
</comment>
<comment type="interaction">
    <interactant intactId="EBI-6460">
        <id>P39013</id>
    </interactant>
    <interactant intactId="EBI-12875">
        <id>P32521</id>
        <label>PAN1</label>
    </interactant>
    <organismsDiffer>false</organismsDiffer>
    <experiments>10</experiments>
</comment>
<comment type="interaction">
    <interactant intactId="EBI-6460">
        <id>P39013</id>
    </interactant>
    <interactant intactId="EBI-17313">
        <id>P32790</id>
        <label>SLA1</label>
    </interactant>
    <organismsDiffer>false</organismsDiffer>
    <experiments>5</experiments>
</comment>
<comment type="subcellular location">
    <subcellularLocation>
        <location>Cell membrane</location>
        <topology>Peripheral membrane protein</topology>
        <orientation>Cytoplasmic side</orientation>
    </subcellularLocation>
    <subcellularLocation>
        <location>Endosome membrane</location>
        <topology>Peripheral membrane protein</topology>
        <orientation>Cytoplasmic side</orientation>
    </subcellularLocation>
    <subcellularLocation>
        <location>Cytoplasm</location>
        <location>Cytoskeleton</location>
        <location>Actin patch</location>
    </subcellularLocation>
    <text>Cytoplasmic and cortical actin patches.</text>
</comment>
<comment type="miscellaneous">
    <text evidence="11">Present with 2610 molecules/cell in log phase SD medium.</text>
</comment>
<comment type="similarity">
    <text evidence="30">Belongs to the END3 family.</text>
</comment>
<evidence type="ECO:0000255" key="1"/>
<evidence type="ECO:0000255" key="2">
    <source>
        <dbReference type="PROSITE-ProRule" id="PRU00077"/>
    </source>
</evidence>
<evidence type="ECO:0000255" key="3">
    <source>
        <dbReference type="PROSITE-ProRule" id="PRU00448"/>
    </source>
</evidence>
<evidence type="ECO:0000256" key="4">
    <source>
        <dbReference type="SAM" id="MobiDB-lite"/>
    </source>
</evidence>
<evidence type="ECO:0000269" key="5">
    <source>
    </source>
</evidence>
<evidence type="ECO:0000269" key="6">
    <source>
    </source>
</evidence>
<evidence type="ECO:0000269" key="7">
    <source>
    </source>
</evidence>
<evidence type="ECO:0000269" key="8">
    <source>
    </source>
</evidence>
<evidence type="ECO:0000269" key="9">
    <source>
    </source>
</evidence>
<evidence type="ECO:0000269" key="10">
    <source>
    </source>
</evidence>
<evidence type="ECO:0000269" key="11">
    <source>
    </source>
</evidence>
<evidence type="ECO:0000269" key="12">
    <source>
    </source>
</evidence>
<evidence type="ECO:0000269" key="13">
    <source>
    </source>
</evidence>
<evidence type="ECO:0000269" key="14">
    <source>
    </source>
</evidence>
<evidence type="ECO:0000269" key="15">
    <source>
    </source>
</evidence>
<evidence type="ECO:0000269" key="16">
    <source>
    </source>
</evidence>
<evidence type="ECO:0000269" key="17">
    <source>
    </source>
</evidence>
<evidence type="ECO:0000269" key="18">
    <source>
    </source>
</evidence>
<evidence type="ECO:0000269" key="19">
    <source>
    </source>
</evidence>
<evidence type="ECO:0000269" key="20">
    <source>
    </source>
</evidence>
<evidence type="ECO:0000269" key="21">
    <source>
    </source>
</evidence>
<evidence type="ECO:0000269" key="22">
    <source>
    </source>
</evidence>
<evidence type="ECO:0000269" key="23">
    <source>
    </source>
</evidence>
<evidence type="ECO:0000269" key="24">
    <source>
    </source>
</evidence>
<evidence type="ECO:0000269" key="25">
    <source>
    </source>
</evidence>
<evidence type="ECO:0000269" key="26">
    <source>
    </source>
</evidence>
<evidence type="ECO:0000269" key="27">
    <source>
    </source>
</evidence>
<evidence type="ECO:0000269" key="28">
    <source>
    </source>
</evidence>
<evidence type="ECO:0000269" key="29">
    <source>
    </source>
</evidence>
<evidence type="ECO:0000305" key="30"/>
<evidence type="ECO:0007744" key="31">
    <source>
    </source>
</evidence>
<name>END3_YEAST</name>
<dbReference type="EMBL" id="X79473">
    <property type="protein sequence ID" value="CAA55981.1"/>
    <property type="molecule type" value="Genomic_DNA"/>
</dbReference>
<dbReference type="EMBL" id="AF458969">
    <property type="protein sequence ID" value="AAM00520.1"/>
    <property type="molecule type" value="Genomic_DNA"/>
</dbReference>
<dbReference type="EMBL" id="AF458970">
    <property type="protein sequence ID" value="AAM00526.1"/>
    <property type="molecule type" value="Genomic_DNA"/>
</dbReference>
<dbReference type="EMBL" id="AF458971">
    <property type="protein sequence ID" value="AAM00532.1"/>
    <property type="molecule type" value="Genomic_DNA"/>
</dbReference>
<dbReference type="EMBL" id="AF458972">
    <property type="protein sequence ID" value="AAM00538.1"/>
    <property type="molecule type" value="Genomic_DNA"/>
</dbReference>
<dbReference type="EMBL" id="AF458973">
    <property type="protein sequence ID" value="AAM00544.1"/>
    <property type="molecule type" value="Genomic_DNA"/>
</dbReference>
<dbReference type="EMBL" id="AF458974">
    <property type="protein sequence ID" value="AAM00550.1"/>
    <property type="molecule type" value="Genomic_DNA"/>
</dbReference>
<dbReference type="EMBL" id="AF458975">
    <property type="protein sequence ID" value="AAM00556.1"/>
    <property type="molecule type" value="Genomic_DNA"/>
</dbReference>
<dbReference type="EMBL" id="AF458976">
    <property type="protein sequence ID" value="AAM00562.1"/>
    <property type="molecule type" value="Genomic_DNA"/>
</dbReference>
<dbReference type="EMBL" id="AF458977">
    <property type="protein sequence ID" value="AAM00568.1"/>
    <property type="molecule type" value="Genomic_DNA"/>
</dbReference>
<dbReference type="EMBL" id="AF458978">
    <property type="protein sequence ID" value="AAM00574.1"/>
    <property type="molecule type" value="Genomic_DNA"/>
</dbReference>
<dbReference type="EMBL" id="AF458979">
    <property type="protein sequence ID" value="AAM00580.1"/>
    <property type="molecule type" value="Genomic_DNA"/>
</dbReference>
<dbReference type="EMBL" id="AF458980">
    <property type="protein sequence ID" value="AAM00586.1"/>
    <property type="molecule type" value="Genomic_DNA"/>
</dbReference>
<dbReference type="EMBL" id="AF458981">
    <property type="protein sequence ID" value="AAM00592.1"/>
    <property type="molecule type" value="Genomic_DNA"/>
</dbReference>
<dbReference type="EMBL" id="DQ115393">
    <property type="protein sequence ID" value="AAZ22524.1"/>
    <property type="molecule type" value="Genomic_DNA"/>
</dbReference>
<dbReference type="EMBL" id="X89016">
    <property type="protein sequence ID" value="CAA61426.1"/>
    <property type="molecule type" value="Genomic_DNA"/>
</dbReference>
<dbReference type="EMBL" id="Z71360">
    <property type="protein sequence ID" value="CAA95959.1"/>
    <property type="molecule type" value="Genomic_DNA"/>
</dbReference>
<dbReference type="EMBL" id="BK006947">
    <property type="protein sequence ID" value="DAA10461.1"/>
    <property type="molecule type" value="Genomic_DNA"/>
</dbReference>
<dbReference type="PIR" id="S57538">
    <property type="entry name" value="S57538"/>
</dbReference>
<dbReference type="RefSeq" id="NP_014315.1">
    <property type="nucleotide sequence ID" value="NM_001182922.1"/>
</dbReference>
<dbReference type="BioGRID" id="35739">
    <property type="interactions" value="358"/>
</dbReference>
<dbReference type="ComplexPortal" id="CPX-426">
    <property type="entry name" value="PAN1 actin cytoskeleton-regulatory complex"/>
</dbReference>
<dbReference type="DIP" id="DIP-2220N"/>
<dbReference type="FunCoup" id="P39013">
    <property type="interactions" value="170"/>
</dbReference>
<dbReference type="IntAct" id="P39013">
    <property type="interactions" value="29"/>
</dbReference>
<dbReference type="MINT" id="P39013"/>
<dbReference type="STRING" id="4932.YNL084C"/>
<dbReference type="iPTMnet" id="P39013"/>
<dbReference type="PaxDb" id="4932-YNL084C"/>
<dbReference type="PeptideAtlas" id="P39013"/>
<dbReference type="EnsemblFungi" id="YNL084C_mRNA">
    <property type="protein sequence ID" value="YNL084C"/>
    <property type="gene ID" value="YNL084C"/>
</dbReference>
<dbReference type="GeneID" id="855640"/>
<dbReference type="KEGG" id="sce:YNL084C"/>
<dbReference type="AGR" id="SGD:S000005028"/>
<dbReference type="SGD" id="S000005028">
    <property type="gene designation" value="END3"/>
</dbReference>
<dbReference type="VEuPathDB" id="FungiDB:YNL084C"/>
<dbReference type="eggNOG" id="KOG0998">
    <property type="taxonomic scope" value="Eukaryota"/>
</dbReference>
<dbReference type="HOGENOM" id="CLU_040829_0_0_1"/>
<dbReference type="InParanoid" id="P39013"/>
<dbReference type="OMA" id="HCLRQRN"/>
<dbReference type="OrthoDB" id="1716625at2759"/>
<dbReference type="BioCyc" id="YEAST:G3O-33113-MONOMER"/>
<dbReference type="Reactome" id="R-SCE-416482">
    <property type="pathway name" value="G alpha (12/13) signalling events"/>
</dbReference>
<dbReference type="Reactome" id="R-SCE-8856828">
    <property type="pathway name" value="Clathrin-mediated endocytosis"/>
</dbReference>
<dbReference type="Reactome" id="R-SCE-9013148">
    <property type="pathway name" value="CDC42 GTPase cycle"/>
</dbReference>
<dbReference type="Reactome" id="R-SCE-9013406">
    <property type="pathway name" value="RHOQ GTPase cycle"/>
</dbReference>
<dbReference type="Reactome" id="R-SCE-9013420">
    <property type="pathway name" value="RHOU GTPase cycle"/>
</dbReference>
<dbReference type="BioGRID-ORCS" id="855640">
    <property type="hits" value="2 hits in 10 CRISPR screens"/>
</dbReference>
<dbReference type="CD-CODE" id="E019EF73">
    <property type="entry name" value="Ede1 condensate"/>
</dbReference>
<dbReference type="PRO" id="PR:P39013"/>
<dbReference type="Proteomes" id="UP000002311">
    <property type="component" value="Chromosome XIV"/>
</dbReference>
<dbReference type="RNAct" id="P39013">
    <property type="molecule type" value="protein"/>
</dbReference>
<dbReference type="GO" id="GO:0030479">
    <property type="term" value="C:actin cortical patch"/>
    <property type="evidence" value="ECO:0007669"/>
    <property type="project" value="UniProtKB-SubCell"/>
</dbReference>
<dbReference type="GO" id="GO:1990964">
    <property type="term" value="C:actin cytoskeleton-regulatory complex"/>
    <property type="evidence" value="ECO:0000314"/>
    <property type="project" value="SGD"/>
</dbReference>
<dbReference type="GO" id="GO:0071944">
    <property type="term" value="C:cell periphery"/>
    <property type="evidence" value="ECO:0007005"/>
    <property type="project" value="SGD"/>
</dbReference>
<dbReference type="GO" id="GO:0005737">
    <property type="term" value="C:cytoplasm"/>
    <property type="evidence" value="ECO:0000318"/>
    <property type="project" value="GO_Central"/>
</dbReference>
<dbReference type="GO" id="GO:0010008">
    <property type="term" value="C:endosome membrane"/>
    <property type="evidence" value="ECO:0007669"/>
    <property type="project" value="UniProtKB-SubCell"/>
</dbReference>
<dbReference type="GO" id="GO:0043332">
    <property type="term" value="C:mating projection tip"/>
    <property type="evidence" value="ECO:0007005"/>
    <property type="project" value="SGD"/>
</dbReference>
<dbReference type="GO" id="GO:0005886">
    <property type="term" value="C:plasma membrane"/>
    <property type="evidence" value="ECO:0000318"/>
    <property type="project" value="GO_Central"/>
</dbReference>
<dbReference type="GO" id="GO:0003779">
    <property type="term" value="F:actin binding"/>
    <property type="evidence" value="ECO:0007669"/>
    <property type="project" value="UniProtKB-KW"/>
</dbReference>
<dbReference type="GO" id="GO:0005509">
    <property type="term" value="F:calcium ion binding"/>
    <property type="evidence" value="ECO:0007669"/>
    <property type="project" value="InterPro"/>
</dbReference>
<dbReference type="GO" id="GO:0030674">
    <property type="term" value="F:protein-macromolecule adaptor activity"/>
    <property type="evidence" value="ECO:0000353"/>
    <property type="project" value="SGD"/>
</dbReference>
<dbReference type="GO" id="GO:0007015">
    <property type="term" value="P:actin filament organization"/>
    <property type="evidence" value="ECO:0007669"/>
    <property type="project" value="InterPro"/>
</dbReference>
<dbReference type="GO" id="GO:0030476">
    <property type="term" value="P:ascospore wall assembly"/>
    <property type="evidence" value="ECO:0000315"/>
    <property type="project" value="SGD"/>
</dbReference>
<dbReference type="GO" id="GO:0071555">
    <property type="term" value="P:cell wall organization"/>
    <property type="evidence" value="ECO:0000315"/>
    <property type="project" value="ComplexPortal"/>
</dbReference>
<dbReference type="GO" id="GO:0006897">
    <property type="term" value="P:endocytosis"/>
    <property type="evidence" value="ECO:0000315"/>
    <property type="project" value="SGD"/>
</dbReference>
<dbReference type="GO" id="GO:0016197">
    <property type="term" value="P:endosomal transport"/>
    <property type="evidence" value="ECO:0000318"/>
    <property type="project" value="GO_Central"/>
</dbReference>
<dbReference type="GO" id="GO:0061709">
    <property type="term" value="P:reticulophagy"/>
    <property type="evidence" value="ECO:0000316"/>
    <property type="project" value="SGD"/>
</dbReference>
<dbReference type="CDD" id="cd00052">
    <property type="entry name" value="EH"/>
    <property type="match status" value="1"/>
</dbReference>
<dbReference type="FunFam" id="1.10.238.10:FF:000339">
    <property type="entry name" value="Actin cytoskeleton-regulatory complex protein END3"/>
    <property type="match status" value="1"/>
</dbReference>
<dbReference type="FunFam" id="1.10.238.10:FF:000323">
    <property type="entry name" value="Actin cytoskeleton-regulatory complex protein end3"/>
    <property type="match status" value="1"/>
</dbReference>
<dbReference type="Gene3D" id="1.10.238.10">
    <property type="entry name" value="EF-hand"/>
    <property type="match status" value="2"/>
</dbReference>
<dbReference type="InterPro" id="IPR011992">
    <property type="entry name" value="EF-hand-dom_pair"/>
</dbReference>
<dbReference type="InterPro" id="IPR018247">
    <property type="entry name" value="EF_Hand_1_Ca_BS"/>
</dbReference>
<dbReference type="InterPro" id="IPR002048">
    <property type="entry name" value="EF_hand_dom"/>
</dbReference>
<dbReference type="InterPro" id="IPR000261">
    <property type="entry name" value="EH_dom"/>
</dbReference>
<dbReference type="InterPro" id="IPR025604">
    <property type="entry name" value="End3"/>
</dbReference>
<dbReference type="PANTHER" id="PTHR11216">
    <property type="entry name" value="EH DOMAIN"/>
    <property type="match status" value="1"/>
</dbReference>
<dbReference type="Pfam" id="PF12763">
    <property type="entry name" value="EH"/>
    <property type="match status" value="1"/>
</dbReference>
<dbReference type="Pfam" id="PF12761">
    <property type="entry name" value="End3"/>
    <property type="match status" value="1"/>
</dbReference>
<dbReference type="SMART" id="SM00027">
    <property type="entry name" value="EH"/>
    <property type="match status" value="2"/>
</dbReference>
<dbReference type="SUPFAM" id="SSF47473">
    <property type="entry name" value="EF-hand"/>
    <property type="match status" value="2"/>
</dbReference>
<dbReference type="PROSITE" id="PS00018">
    <property type="entry name" value="EF_HAND_1"/>
    <property type="match status" value="1"/>
</dbReference>
<dbReference type="PROSITE" id="PS50222">
    <property type="entry name" value="EF_HAND_2"/>
    <property type="match status" value="2"/>
</dbReference>
<dbReference type="PROSITE" id="PS50031">
    <property type="entry name" value="EH"/>
    <property type="match status" value="2"/>
</dbReference>
<accession>P39013</accession>
<accession>D6W195</accession>
<accession>Q8TFC4</accession>
<accession>Q8TFD0</accession>
<accession>Q8TG51</accession>
<sequence>MPKLEQFEIKKYWQIFSGLKPIENKVNHDQVLPILYNSKLDSSVLNKIWFLADIDDDDNLDFEEFVICMRLIFDMVNKNISSVPDELPDWLIPGSKVNLIKERKKRKQIENADLPPKKEIKVDWYMSPDDLNQYEKIYNSCAKLTDGTITFNELSTKLSTKFFNISKTDLNKVWSLINPQNLPSIDRDPTFYFIHCLRQRNDLGAEIPASLPNSLAEVCNKKQLSYDLRSSQPPTKRKEEANEVDNLRDNGQNSSSDSSGSNVLSNEDSIKQKYASLTDDQVANMREQLEGLLNYKKSEKTQGGSKLSKRINIRSITDDLDNIEQQVEVLENYLNNKRHELQALQAEIN</sequence>